<gene>
    <name evidence="1" type="primary">guaC</name>
    <name type="ordered locus">VS_II1110</name>
</gene>
<organism>
    <name type="scientific">Vibrio atlanticus (strain LGP32)</name>
    <name type="common">Vibrio splendidus (strain Mel32)</name>
    <dbReference type="NCBI Taxonomy" id="575788"/>
    <lineage>
        <taxon>Bacteria</taxon>
        <taxon>Pseudomonadati</taxon>
        <taxon>Pseudomonadota</taxon>
        <taxon>Gammaproteobacteria</taxon>
        <taxon>Vibrionales</taxon>
        <taxon>Vibrionaceae</taxon>
        <taxon>Vibrio</taxon>
    </lineage>
</organism>
<reference key="1">
    <citation type="submission" date="2009-02" db="EMBL/GenBank/DDBJ databases">
        <title>Vibrio splendidus str. LGP32 complete genome.</title>
        <authorList>
            <person name="Mazel D."/>
            <person name="Le Roux F."/>
        </authorList>
    </citation>
    <scope>NUCLEOTIDE SEQUENCE [LARGE SCALE GENOMIC DNA]</scope>
    <source>
        <strain>LGP32</strain>
    </source>
</reference>
<comment type="function">
    <text evidence="1">Catalyzes the irreversible NADPH-dependent deamination of GMP to IMP. It functions in the conversion of nucleobase, nucleoside and nucleotide derivatives of G to A nucleotides, and in maintaining the intracellular balance of A and G nucleotides.</text>
</comment>
<comment type="catalytic activity">
    <reaction evidence="1">
        <text>IMP + NH4(+) + NADP(+) = GMP + NADPH + 2 H(+)</text>
        <dbReference type="Rhea" id="RHEA:17185"/>
        <dbReference type="ChEBI" id="CHEBI:15378"/>
        <dbReference type="ChEBI" id="CHEBI:28938"/>
        <dbReference type="ChEBI" id="CHEBI:57783"/>
        <dbReference type="ChEBI" id="CHEBI:58053"/>
        <dbReference type="ChEBI" id="CHEBI:58115"/>
        <dbReference type="ChEBI" id="CHEBI:58349"/>
        <dbReference type="EC" id="1.7.1.7"/>
    </reaction>
</comment>
<comment type="subunit">
    <text evidence="1">Homotetramer.</text>
</comment>
<comment type="similarity">
    <text evidence="1">Belongs to the IMPDH/GMPR family. GuaC type 1 subfamily.</text>
</comment>
<protein>
    <recommendedName>
        <fullName evidence="1">GMP reductase</fullName>
        <ecNumber evidence="1">1.7.1.7</ecNumber>
    </recommendedName>
    <alternativeName>
        <fullName evidence="1">Guanosine 5'-monophosphate oxidoreductase</fullName>
        <shortName evidence="1">Guanosine monophosphate reductase</shortName>
    </alternativeName>
</protein>
<keyword id="KW-0479">Metal-binding</keyword>
<keyword id="KW-0521">NADP</keyword>
<keyword id="KW-0560">Oxidoreductase</keyword>
<keyword id="KW-0630">Potassium</keyword>
<name>GUAC_VIBA3</name>
<proteinExistence type="inferred from homology"/>
<feature type="chain" id="PRO_1000146990" description="GMP reductase">
    <location>
        <begin position="1"/>
        <end position="347"/>
    </location>
</feature>
<feature type="active site" description="Thioimidate intermediate" evidence="1">
    <location>
        <position position="186"/>
    </location>
</feature>
<feature type="binding site" evidence="1">
    <location>
        <begin position="108"/>
        <end position="131"/>
    </location>
    <ligand>
        <name>NADP(+)</name>
        <dbReference type="ChEBI" id="CHEBI:58349"/>
    </ligand>
</feature>
<feature type="binding site" evidence="1">
    <location>
        <position position="181"/>
    </location>
    <ligand>
        <name>K(+)</name>
        <dbReference type="ChEBI" id="CHEBI:29103"/>
    </ligand>
</feature>
<feature type="binding site" evidence="1">
    <location>
        <position position="183"/>
    </location>
    <ligand>
        <name>K(+)</name>
        <dbReference type="ChEBI" id="CHEBI:29103"/>
    </ligand>
</feature>
<feature type="binding site" evidence="1">
    <location>
        <begin position="216"/>
        <end position="239"/>
    </location>
    <ligand>
        <name>NADP(+)</name>
        <dbReference type="ChEBI" id="CHEBI:58349"/>
    </ligand>
</feature>
<dbReference type="EC" id="1.7.1.7" evidence="1"/>
<dbReference type="EMBL" id="FM954973">
    <property type="protein sequence ID" value="CAV27011.1"/>
    <property type="molecule type" value="Genomic_DNA"/>
</dbReference>
<dbReference type="SMR" id="B7VS90"/>
<dbReference type="STRING" id="575788.VS_II1110"/>
<dbReference type="KEGG" id="vsp:VS_II1110"/>
<dbReference type="eggNOG" id="COG0516">
    <property type="taxonomic scope" value="Bacteria"/>
</dbReference>
<dbReference type="HOGENOM" id="CLU_022552_5_3_6"/>
<dbReference type="Proteomes" id="UP000009100">
    <property type="component" value="Chromosome 2"/>
</dbReference>
<dbReference type="GO" id="GO:0005829">
    <property type="term" value="C:cytosol"/>
    <property type="evidence" value="ECO:0007669"/>
    <property type="project" value="TreeGrafter"/>
</dbReference>
<dbReference type="GO" id="GO:1902560">
    <property type="term" value="C:GMP reductase complex"/>
    <property type="evidence" value="ECO:0007669"/>
    <property type="project" value="InterPro"/>
</dbReference>
<dbReference type="GO" id="GO:0003920">
    <property type="term" value="F:GMP reductase activity"/>
    <property type="evidence" value="ECO:0007669"/>
    <property type="project" value="UniProtKB-UniRule"/>
</dbReference>
<dbReference type="GO" id="GO:0046872">
    <property type="term" value="F:metal ion binding"/>
    <property type="evidence" value="ECO:0007669"/>
    <property type="project" value="UniProtKB-KW"/>
</dbReference>
<dbReference type="GO" id="GO:0006163">
    <property type="term" value="P:purine nucleotide metabolic process"/>
    <property type="evidence" value="ECO:0007669"/>
    <property type="project" value="UniProtKB-UniRule"/>
</dbReference>
<dbReference type="CDD" id="cd00381">
    <property type="entry name" value="IMPDH"/>
    <property type="match status" value="1"/>
</dbReference>
<dbReference type="FunFam" id="3.20.20.70:FF:000012">
    <property type="entry name" value="GMP reductase"/>
    <property type="match status" value="1"/>
</dbReference>
<dbReference type="Gene3D" id="3.20.20.70">
    <property type="entry name" value="Aldolase class I"/>
    <property type="match status" value="1"/>
</dbReference>
<dbReference type="HAMAP" id="MF_00596">
    <property type="entry name" value="GMP_reduct_type1"/>
    <property type="match status" value="1"/>
</dbReference>
<dbReference type="InterPro" id="IPR013785">
    <property type="entry name" value="Aldolase_TIM"/>
</dbReference>
<dbReference type="InterPro" id="IPR050139">
    <property type="entry name" value="GMP_reductase"/>
</dbReference>
<dbReference type="InterPro" id="IPR005993">
    <property type="entry name" value="GMPR"/>
</dbReference>
<dbReference type="InterPro" id="IPR015875">
    <property type="entry name" value="IMP_DH/GMP_Rdtase_CS"/>
</dbReference>
<dbReference type="InterPro" id="IPR001093">
    <property type="entry name" value="IMP_DH_GMPRt"/>
</dbReference>
<dbReference type="NCBIfam" id="TIGR01305">
    <property type="entry name" value="GMP_reduct_1"/>
    <property type="match status" value="1"/>
</dbReference>
<dbReference type="NCBIfam" id="NF003470">
    <property type="entry name" value="PRK05096.1"/>
    <property type="match status" value="1"/>
</dbReference>
<dbReference type="PANTHER" id="PTHR43170">
    <property type="entry name" value="GMP REDUCTASE"/>
    <property type="match status" value="1"/>
</dbReference>
<dbReference type="PANTHER" id="PTHR43170:SF5">
    <property type="entry name" value="GMP REDUCTASE"/>
    <property type="match status" value="1"/>
</dbReference>
<dbReference type="Pfam" id="PF00478">
    <property type="entry name" value="IMPDH"/>
    <property type="match status" value="1"/>
</dbReference>
<dbReference type="PIRSF" id="PIRSF000235">
    <property type="entry name" value="GMP_reductase"/>
    <property type="match status" value="1"/>
</dbReference>
<dbReference type="SMART" id="SM01240">
    <property type="entry name" value="IMPDH"/>
    <property type="match status" value="1"/>
</dbReference>
<dbReference type="SUPFAM" id="SSF51412">
    <property type="entry name" value="Inosine monophosphate dehydrogenase (IMPDH)"/>
    <property type="match status" value="1"/>
</dbReference>
<dbReference type="PROSITE" id="PS00487">
    <property type="entry name" value="IMP_DH_GMP_RED"/>
    <property type="match status" value="1"/>
</dbReference>
<evidence type="ECO:0000255" key="1">
    <source>
        <dbReference type="HAMAP-Rule" id="MF_00596"/>
    </source>
</evidence>
<accession>B7VS90</accession>
<sequence>MRIEQELKLGFKDVLFRPKRSTLKSRSQVELTRDFTFKHSGRQWSGTPVIAANMDSVASFEMAAALAEHGVMTAVHKHYTVEQWAEFAKTADKKTLNNVFVSTGTSEAEFEKVKKIMALSEEFVFICIDIANGYSEHLVEFVQKVRAEFPTKVISAGNVVTGDMVEELILAGADIVKVGIGPGSVCTTRVKTGVGYPQLSAIIECGDAAHGLGGMIIGDGGCSCAGDVSKAFGGGADFVMLGGMLAGHSESGGEVVEQDGKQYMKFYGMSSQSAMDKHSGGVAKYRAAEGKTVLLPYRGSVHNTISDILGGVRSTCTYVGAAKLKELTKRTTFIRVQEQENNVFGKE</sequence>